<proteinExistence type="predicted"/>
<comment type="function">
    <text>Confers azacytidine resistance in high copy.</text>
</comment>
<comment type="sequence caution" evidence="2">
    <conflict type="frameshift">
        <sequence resource="EMBL-CDS" id="CAA66973"/>
    </conflict>
</comment>
<keyword id="KW-1185">Reference proteome</keyword>
<protein>
    <recommendedName>
        <fullName>5-azacytidine resistance protein azr1</fullName>
    </recommendedName>
</protein>
<gene>
    <name type="primary">azr1</name>
    <name type="ORF">SPAC1556.03</name>
</gene>
<organism>
    <name type="scientific">Schizosaccharomyces pombe (strain 972 / ATCC 24843)</name>
    <name type="common">Fission yeast</name>
    <dbReference type="NCBI Taxonomy" id="284812"/>
    <lineage>
        <taxon>Eukaryota</taxon>
        <taxon>Fungi</taxon>
        <taxon>Dikarya</taxon>
        <taxon>Ascomycota</taxon>
        <taxon>Taphrinomycotina</taxon>
        <taxon>Schizosaccharomycetes</taxon>
        <taxon>Schizosaccharomycetales</taxon>
        <taxon>Schizosaccharomycetaceae</taxon>
        <taxon>Schizosaccharomyces</taxon>
    </lineage>
</organism>
<sequence>MNVTRLYFRVAGTKQFARYVHKYAAYSSTSFQKKKSHFPSPATLDHPDAGEDAFINLRNENYILNAVFDGVGGWANVGIDPSIFSWGLVREIKKVFNNSDEFQPSPLTLLSKAYAALKKSNTVEAGSSTACLTLFNCGNGKLHSLNLGDSGFLILRNGAIHYASPAQVLQFNMPYQLAIYPRNYRSAENIGPKMGQATVHDLKDNDLVILATDGIFDNIEEKSILDIAGVVDFSSLSNVQKCLDDLAMRICRQAVLNSLDTKWESPFAKTAKSFGFKFQGGKVDDTTITCLLIKSKNYE</sequence>
<dbReference type="EMBL" id="X98329">
    <property type="protein sequence ID" value="CAA66973.1"/>
    <property type="status" value="ALT_FRAME"/>
    <property type="molecule type" value="Genomic_DNA"/>
</dbReference>
<dbReference type="EMBL" id="CU329670">
    <property type="protein sequence ID" value="CAB61214.2"/>
    <property type="molecule type" value="Genomic_DNA"/>
</dbReference>
<dbReference type="PIR" id="T50082">
    <property type="entry name" value="T50082"/>
</dbReference>
<dbReference type="RefSeq" id="NP_594320.2">
    <property type="nucleotide sequence ID" value="NM_001019742.3"/>
</dbReference>
<dbReference type="SMR" id="Q09189"/>
<dbReference type="BioGRID" id="278086">
    <property type="interactions" value="5"/>
</dbReference>
<dbReference type="FunCoup" id="Q09189">
    <property type="interactions" value="281"/>
</dbReference>
<dbReference type="STRING" id="284812.Q09189"/>
<dbReference type="PaxDb" id="4896-SPAC1556.03.1"/>
<dbReference type="EnsemblFungi" id="SPAC1556.03.1">
    <property type="protein sequence ID" value="SPAC1556.03.1:pep"/>
    <property type="gene ID" value="SPAC1556.03"/>
</dbReference>
<dbReference type="GeneID" id="2541589"/>
<dbReference type="KEGG" id="spo:2541589"/>
<dbReference type="PomBase" id="SPAC1556.03">
    <property type="gene designation" value="azr1"/>
</dbReference>
<dbReference type="VEuPathDB" id="FungiDB:SPAC1556.03"/>
<dbReference type="eggNOG" id="KOG1379">
    <property type="taxonomic scope" value="Eukaryota"/>
</dbReference>
<dbReference type="HOGENOM" id="CLU_029404_3_0_1"/>
<dbReference type="InParanoid" id="Q09189"/>
<dbReference type="OMA" id="ANTIAWM"/>
<dbReference type="PhylomeDB" id="Q09189"/>
<dbReference type="PRO" id="PR:Q09189"/>
<dbReference type="Proteomes" id="UP000002485">
    <property type="component" value="Chromosome I"/>
</dbReference>
<dbReference type="GO" id="GO:0005739">
    <property type="term" value="C:mitochondrion"/>
    <property type="evidence" value="ECO:0007005"/>
    <property type="project" value="PomBase"/>
</dbReference>
<dbReference type="GO" id="GO:0004722">
    <property type="term" value="F:protein serine/threonine phosphatase activity"/>
    <property type="evidence" value="ECO:0000250"/>
    <property type="project" value="PomBase"/>
</dbReference>
<dbReference type="GO" id="GO:1904775">
    <property type="term" value="P:positive regulation of ubiquinone biosynthetic process"/>
    <property type="evidence" value="ECO:0000304"/>
    <property type="project" value="PomBase"/>
</dbReference>
<dbReference type="CDD" id="cd00143">
    <property type="entry name" value="PP2Cc"/>
    <property type="match status" value="1"/>
</dbReference>
<dbReference type="Gene3D" id="3.60.40.10">
    <property type="entry name" value="PPM-type phosphatase domain"/>
    <property type="match status" value="2"/>
</dbReference>
<dbReference type="InterPro" id="IPR036457">
    <property type="entry name" value="PPM-type-like_dom_sf"/>
</dbReference>
<dbReference type="InterPro" id="IPR001932">
    <property type="entry name" value="PPM-type_phosphatase-like_dom"/>
</dbReference>
<dbReference type="InterPro" id="IPR039123">
    <property type="entry name" value="PPTC7"/>
</dbReference>
<dbReference type="PANTHER" id="PTHR12320">
    <property type="entry name" value="PROTEIN PHOSPHATASE 2C"/>
    <property type="match status" value="1"/>
</dbReference>
<dbReference type="PANTHER" id="PTHR12320:SF1">
    <property type="entry name" value="PROTEIN PHOSPHATASE PTC7 HOMOLOG"/>
    <property type="match status" value="1"/>
</dbReference>
<dbReference type="SMART" id="SM00331">
    <property type="entry name" value="PP2C_SIG"/>
    <property type="match status" value="1"/>
</dbReference>
<dbReference type="SMART" id="SM00332">
    <property type="entry name" value="PP2Cc"/>
    <property type="match status" value="1"/>
</dbReference>
<dbReference type="SUPFAM" id="SSF81606">
    <property type="entry name" value="PP2C-like"/>
    <property type="match status" value="1"/>
</dbReference>
<dbReference type="PROSITE" id="PS51746">
    <property type="entry name" value="PPM_2"/>
    <property type="match status" value="1"/>
</dbReference>
<feature type="chain" id="PRO_0000064784" description="5-azacytidine resistance protein azr1">
    <location>
        <begin position="1"/>
        <end position="299"/>
    </location>
</feature>
<feature type="domain" description="PPM-type phosphatase" evidence="1">
    <location>
        <begin position="35"/>
        <end position="293"/>
    </location>
</feature>
<name>AZR1_SCHPO</name>
<accession>Q09189</accession>
<accession>Q9UTJ6</accession>
<evidence type="ECO:0000255" key="1">
    <source>
        <dbReference type="PROSITE-ProRule" id="PRU01082"/>
    </source>
</evidence>
<evidence type="ECO:0000305" key="2"/>
<reference key="1">
    <citation type="journal article" date="1997" name="Yeast">
        <title>Isolation of a Schizosaccharomyces pombe gene which in high copy confers resistance to the nucleoside analogue 5-azacytidine.</title>
        <authorList>
            <person name="Platt G.M."/>
            <person name="Price C."/>
        </authorList>
    </citation>
    <scope>NUCLEOTIDE SEQUENCE [GENOMIC DNA]</scope>
    <source>
        <strain>972 / ATCC 24843</strain>
    </source>
</reference>
<reference key="2">
    <citation type="journal article" date="2002" name="Nature">
        <title>The genome sequence of Schizosaccharomyces pombe.</title>
        <authorList>
            <person name="Wood V."/>
            <person name="Gwilliam R."/>
            <person name="Rajandream M.A."/>
            <person name="Lyne M.H."/>
            <person name="Lyne R."/>
            <person name="Stewart A."/>
            <person name="Sgouros J.G."/>
            <person name="Peat N."/>
            <person name="Hayles J."/>
            <person name="Baker S.G."/>
            <person name="Basham D."/>
            <person name="Bowman S."/>
            <person name="Brooks K."/>
            <person name="Brown D."/>
            <person name="Brown S."/>
            <person name="Chillingworth T."/>
            <person name="Churcher C.M."/>
            <person name="Collins M."/>
            <person name="Connor R."/>
            <person name="Cronin A."/>
            <person name="Davis P."/>
            <person name="Feltwell T."/>
            <person name="Fraser A."/>
            <person name="Gentles S."/>
            <person name="Goble A."/>
            <person name="Hamlin N."/>
            <person name="Harris D.E."/>
            <person name="Hidalgo J."/>
            <person name="Hodgson G."/>
            <person name="Holroyd S."/>
            <person name="Hornsby T."/>
            <person name="Howarth S."/>
            <person name="Huckle E.J."/>
            <person name="Hunt S."/>
            <person name="Jagels K."/>
            <person name="James K.D."/>
            <person name="Jones L."/>
            <person name="Jones M."/>
            <person name="Leather S."/>
            <person name="McDonald S."/>
            <person name="McLean J."/>
            <person name="Mooney P."/>
            <person name="Moule S."/>
            <person name="Mungall K.L."/>
            <person name="Murphy L.D."/>
            <person name="Niblett D."/>
            <person name="Odell C."/>
            <person name="Oliver K."/>
            <person name="O'Neil S."/>
            <person name="Pearson D."/>
            <person name="Quail M.A."/>
            <person name="Rabbinowitsch E."/>
            <person name="Rutherford K.M."/>
            <person name="Rutter S."/>
            <person name="Saunders D."/>
            <person name="Seeger K."/>
            <person name="Sharp S."/>
            <person name="Skelton J."/>
            <person name="Simmonds M.N."/>
            <person name="Squares R."/>
            <person name="Squares S."/>
            <person name="Stevens K."/>
            <person name="Taylor K."/>
            <person name="Taylor R.G."/>
            <person name="Tivey A."/>
            <person name="Walsh S.V."/>
            <person name="Warren T."/>
            <person name="Whitehead S."/>
            <person name="Woodward J.R."/>
            <person name="Volckaert G."/>
            <person name="Aert R."/>
            <person name="Robben J."/>
            <person name="Grymonprez B."/>
            <person name="Weltjens I."/>
            <person name="Vanstreels E."/>
            <person name="Rieger M."/>
            <person name="Schaefer M."/>
            <person name="Mueller-Auer S."/>
            <person name="Gabel C."/>
            <person name="Fuchs M."/>
            <person name="Duesterhoeft A."/>
            <person name="Fritzc C."/>
            <person name="Holzer E."/>
            <person name="Moestl D."/>
            <person name="Hilbert H."/>
            <person name="Borzym K."/>
            <person name="Langer I."/>
            <person name="Beck A."/>
            <person name="Lehrach H."/>
            <person name="Reinhardt R."/>
            <person name="Pohl T.M."/>
            <person name="Eger P."/>
            <person name="Zimmermann W."/>
            <person name="Wedler H."/>
            <person name="Wambutt R."/>
            <person name="Purnelle B."/>
            <person name="Goffeau A."/>
            <person name="Cadieu E."/>
            <person name="Dreano S."/>
            <person name="Gloux S."/>
            <person name="Lelaure V."/>
            <person name="Mottier S."/>
            <person name="Galibert F."/>
            <person name="Aves S.J."/>
            <person name="Xiang Z."/>
            <person name="Hunt C."/>
            <person name="Moore K."/>
            <person name="Hurst S.M."/>
            <person name="Lucas M."/>
            <person name="Rochet M."/>
            <person name="Gaillardin C."/>
            <person name="Tallada V.A."/>
            <person name="Garzon A."/>
            <person name="Thode G."/>
            <person name="Daga R.R."/>
            <person name="Cruzado L."/>
            <person name="Jimenez J."/>
            <person name="Sanchez M."/>
            <person name="del Rey F."/>
            <person name="Benito J."/>
            <person name="Dominguez A."/>
            <person name="Revuelta J.L."/>
            <person name="Moreno S."/>
            <person name="Armstrong J."/>
            <person name="Forsburg S.L."/>
            <person name="Cerutti L."/>
            <person name="Lowe T."/>
            <person name="McCombie W.R."/>
            <person name="Paulsen I."/>
            <person name="Potashkin J."/>
            <person name="Shpakovski G.V."/>
            <person name="Ussery D."/>
            <person name="Barrell B.G."/>
            <person name="Nurse P."/>
        </authorList>
    </citation>
    <scope>NUCLEOTIDE SEQUENCE [LARGE SCALE GENOMIC DNA]</scope>
    <source>
        <strain>972 / ATCC 24843</strain>
    </source>
</reference>